<protein>
    <recommendedName>
        <fullName>Exonuclease V, mitochondrial</fullName>
        <shortName>Exo V</shortName>
        <ecNumber>3.1.-.-</ecNumber>
    </recommendedName>
    <alternativeName>
        <fullName>Defects in morphology protein 1</fullName>
    </alternativeName>
</protein>
<proteinExistence type="inferred from homology"/>
<name>EXO5_CANTT</name>
<reference key="1">
    <citation type="journal article" date="2009" name="Nature">
        <title>Evolution of pathogenicity and sexual reproduction in eight Candida genomes.</title>
        <authorList>
            <person name="Butler G."/>
            <person name="Rasmussen M.D."/>
            <person name="Lin M.F."/>
            <person name="Santos M.A.S."/>
            <person name="Sakthikumar S."/>
            <person name="Munro C.A."/>
            <person name="Rheinbay E."/>
            <person name="Grabherr M."/>
            <person name="Forche A."/>
            <person name="Reedy J.L."/>
            <person name="Agrafioti I."/>
            <person name="Arnaud M.B."/>
            <person name="Bates S."/>
            <person name="Brown A.J.P."/>
            <person name="Brunke S."/>
            <person name="Costanzo M.C."/>
            <person name="Fitzpatrick D.A."/>
            <person name="de Groot P.W.J."/>
            <person name="Harris D."/>
            <person name="Hoyer L.L."/>
            <person name="Hube B."/>
            <person name="Klis F.M."/>
            <person name="Kodira C."/>
            <person name="Lennard N."/>
            <person name="Logue M.E."/>
            <person name="Martin R."/>
            <person name="Neiman A.M."/>
            <person name="Nikolaou E."/>
            <person name="Quail M.A."/>
            <person name="Quinn J."/>
            <person name="Santos M.C."/>
            <person name="Schmitzberger F.F."/>
            <person name="Sherlock G."/>
            <person name="Shah P."/>
            <person name="Silverstein K.A.T."/>
            <person name="Skrzypek M.S."/>
            <person name="Soll D."/>
            <person name="Staggs R."/>
            <person name="Stansfield I."/>
            <person name="Stumpf M.P.H."/>
            <person name="Sudbery P.E."/>
            <person name="Srikantha T."/>
            <person name="Zeng Q."/>
            <person name="Berman J."/>
            <person name="Berriman M."/>
            <person name="Heitman J."/>
            <person name="Gow N.A.R."/>
            <person name="Lorenz M.C."/>
            <person name="Birren B.W."/>
            <person name="Kellis M."/>
            <person name="Cuomo C.A."/>
        </authorList>
    </citation>
    <scope>NUCLEOTIDE SEQUENCE [LARGE SCALE GENOMIC DNA]</scope>
    <source>
        <strain>ATCC MYA-3404 / T1</strain>
    </source>
</reference>
<evidence type="ECO:0000250" key="1"/>
<evidence type="ECO:0000255" key="2"/>
<evidence type="ECO:0000305" key="3"/>
<dbReference type="EC" id="3.1.-.-"/>
<dbReference type="EMBL" id="GG692395">
    <property type="protein sequence ID" value="EER36009.1"/>
    <property type="molecule type" value="Genomic_DNA"/>
</dbReference>
<dbReference type="RefSeq" id="XP_002545967.1">
    <property type="nucleotide sequence ID" value="XM_002545921.1"/>
</dbReference>
<dbReference type="STRING" id="294747.C5M3V9"/>
<dbReference type="EnsemblFungi" id="CTRG_00748-t43_1">
    <property type="protein sequence ID" value="CTRG_00748-t43_1-p1"/>
    <property type="gene ID" value="CTRG_00748"/>
</dbReference>
<dbReference type="GeneID" id="8301229"/>
<dbReference type="KEGG" id="ctp:CTRG_00748"/>
<dbReference type="VEuPathDB" id="FungiDB:CTRG_00748"/>
<dbReference type="eggNOG" id="ENOG502QR0P">
    <property type="taxonomic scope" value="Eukaryota"/>
</dbReference>
<dbReference type="HOGENOM" id="CLU_019985_0_0_1"/>
<dbReference type="OrthoDB" id="354769at2759"/>
<dbReference type="Proteomes" id="UP000002037">
    <property type="component" value="Unassembled WGS sequence"/>
</dbReference>
<dbReference type="GO" id="GO:0005739">
    <property type="term" value="C:mitochondrion"/>
    <property type="evidence" value="ECO:0007669"/>
    <property type="project" value="UniProtKB-SubCell"/>
</dbReference>
<dbReference type="GO" id="GO:0005634">
    <property type="term" value="C:nucleus"/>
    <property type="evidence" value="ECO:0007669"/>
    <property type="project" value="TreeGrafter"/>
</dbReference>
<dbReference type="GO" id="GO:0051539">
    <property type="term" value="F:4 iron, 4 sulfur cluster binding"/>
    <property type="evidence" value="ECO:0007669"/>
    <property type="project" value="UniProtKB-KW"/>
</dbReference>
<dbReference type="GO" id="GO:0003677">
    <property type="term" value="F:DNA binding"/>
    <property type="evidence" value="ECO:0007669"/>
    <property type="project" value="UniProtKB-KW"/>
</dbReference>
<dbReference type="GO" id="GO:0046872">
    <property type="term" value="F:metal ion binding"/>
    <property type="evidence" value="ECO:0007669"/>
    <property type="project" value="UniProtKB-KW"/>
</dbReference>
<dbReference type="GO" id="GO:0045145">
    <property type="term" value="F:single-stranded DNA 5'-3' DNA exonuclease activity"/>
    <property type="evidence" value="ECO:0007669"/>
    <property type="project" value="InterPro"/>
</dbReference>
<dbReference type="GO" id="GO:0036297">
    <property type="term" value="P:interstrand cross-link repair"/>
    <property type="evidence" value="ECO:0007669"/>
    <property type="project" value="TreeGrafter"/>
</dbReference>
<dbReference type="InterPro" id="IPR019190">
    <property type="entry name" value="EXOV"/>
</dbReference>
<dbReference type="PANTHER" id="PTHR14464">
    <property type="entry name" value="EXONUCLEASE V"/>
    <property type="match status" value="1"/>
</dbReference>
<dbReference type="PANTHER" id="PTHR14464:SF4">
    <property type="entry name" value="EXONUCLEASE V"/>
    <property type="match status" value="1"/>
</dbReference>
<dbReference type="Pfam" id="PF09810">
    <property type="entry name" value="Exo5"/>
    <property type="match status" value="1"/>
</dbReference>
<organism>
    <name type="scientific">Candida tropicalis (strain ATCC MYA-3404 / T1)</name>
    <name type="common">Yeast</name>
    <dbReference type="NCBI Taxonomy" id="294747"/>
    <lineage>
        <taxon>Eukaryota</taxon>
        <taxon>Fungi</taxon>
        <taxon>Dikarya</taxon>
        <taxon>Ascomycota</taxon>
        <taxon>Saccharomycotina</taxon>
        <taxon>Pichiomycetes</taxon>
        <taxon>Debaryomycetaceae</taxon>
        <taxon>Candida/Lodderomyces clade</taxon>
        <taxon>Candida</taxon>
    </lineage>
</organism>
<accession>C5M3V9</accession>
<gene>
    <name type="primary">EXO5</name>
    <name type="synonym">DEM1</name>
    <name type="ORF">CTRG_00748</name>
</gene>
<feature type="transit peptide" description="Mitochondrion" evidence="2">
    <location>
        <begin position="1"/>
        <end position="17"/>
    </location>
</feature>
<feature type="chain" id="PRO_0000406686" description="Exonuclease V, mitochondrial">
    <location>
        <begin position="18"/>
        <end position="605"/>
    </location>
</feature>
<feature type="binding site" evidence="1">
    <location>
        <position position="140"/>
    </location>
    <ligand>
        <name>[4Fe-4S] cluster</name>
        <dbReference type="ChEBI" id="CHEBI:49883"/>
    </ligand>
</feature>
<feature type="binding site" evidence="1">
    <location>
        <position position="563"/>
    </location>
    <ligand>
        <name>[4Fe-4S] cluster</name>
        <dbReference type="ChEBI" id="CHEBI:49883"/>
    </ligand>
</feature>
<feature type="binding site" evidence="1">
    <location>
        <position position="566"/>
    </location>
    <ligand>
        <name>[4Fe-4S] cluster</name>
        <dbReference type="ChEBI" id="CHEBI:49883"/>
    </ligand>
</feature>
<feature type="binding site" evidence="1">
    <location>
        <position position="572"/>
    </location>
    <ligand>
        <name>[4Fe-4S] cluster</name>
        <dbReference type="ChEBI" id="CHEBI:49883"/>
    </ligand>
</feature>
<keyword id="KW-0004">4Fe-4S</keyword>
<keyword id="KW-0238">DNA-binding</keyword>
<keyword id="KW-0269">Exonuclease</keyword>
<keyword id="KW-0378">Hydrolase</keyword>
<keyword id="KW-0408">Iron</keyword>
<keyword id="KW-0411">Iron-sulfur</keyword>
<keyword id="KW-0460">Magnesium</keyword>
<keyword id="KW-0479">Metal-binding</keyword>
<keyword id="KW-0496">Mitochondrion</keyword>
<keyword id="KW-0540">Nuclease</keyword>
<keyword id="KW-1185">Reference proteome</keyword>
<keyword id="KW-0809">Transit peptide</keyword>
<comment type="function">
    <text evidence="1">Single strand DNA specific 5' exonuclease involved in mitochondrial DNA replication and recombination. Releases dinucleotides as main products of catalysis. Has the capacity to slide across 5'double-stranded DNA or 5'RNA sequences and resumes cutting two nucleotides downstream of the double-stranded-to-single-stranded junction or RNA-to-DNA junction, respectively (By similarity).</text>
</comment>
<comment type="cofactor">
    <cofactor evidence="1">
        <name>Mg(2+)</name>
        <dbReference type="ChEBI" id="CHEBI:18420"/>
    </cofactor>
</comment>
<comment type="cofactor">
    <cofactor evidence="1">
        <name>[4Fe-4S] cluster</name>
        <dbReference type="ChEBI" id="CHEBI:49883"/>
    </cofactor>
    <text evidence="1">Binds 1 [4Fe-4S] cluster.</text>
</comment>
<comment type="subunit">
    <text evidence="1">Monomer.</text>
</comment>
<comment type="subcellular location">
    <subcellularLocation>
        <location evidence="1">Mitochondrion</location>
    </subcellularLocation>
</comment>
<comment type="similarity">
    <text evidence="3">Belongs to the EXO5 family.</text>
</comment>
<sequence length="605" mass="70659">MSLNFLKRYLSRSTRNFQHVFEDQHGLLSIRNPEIDVPITTIDDNLDERNINGPQSDQEIVNRLIQSMVISKNEETRPMLKNEQLMNIYKHWNLYHKNDLPFINPTKYTPFEFQSIENDDISYINNPRLSVTKLLISGWCELRELYRVFAGSVRTPPTKAMSAGTKLHLKLEQALHGVIDLEDIENFIRSNTEEIMEMYDLVDNDGIFDMNPDDSIAIDWSETIIERLYSLIVCSESREVILHGYLNLQKESFVENEQEIKNPSSVLVSGIVDQIQFENPENSDDFALFDEVQKYLDVEYEQVDETPLVDLSRFFDDVKNIIQCYPEFQLKFTDLKTRMVYQIPSQKSVLDSAKFQTFYYRYFFELLSKDANFAYRCLLENAKRRGLDVDKPLSVLTTFRILRRHYHLFYNDFLKLADGKPIGFAPFDSERIDSDYEFGKLFVLGKDFAQHQEQASQHLKFIESLGGYDSLEYDKLLLPLLKTWKTPPTLRYLAARSAQFYEIFGSRLGDTTTVEYRNTFTGKIIDTKVYNYNNGELETETIHASDFWNGKLDPEPTNDFSRCQYCEFKSKCAIPKIGKISDSHASIGPEVRKFLNDVKHLQKDC</sequence>